<feature type="chain" id="PRO_0000216178" description="Protein NAP1">
    <location>
        <begin position="1"/>
        <end position="1425"/>
    </location>
</feature>
<feature type="region of interest" description="Disordered" evidence="1">
    <location>
        <begin position="1"/>
        <end position="24"/>
    </location>
</feature>
<feature type="region of interest" description="Disordered" evidence="1">
    <location>
        <begin position="1299"/>
        <end position="1425"/>
    </location>
</feature>
<feature type="compositionally biased region" description="Polar residues" evidence="1">
    <location>
        <begin position="1"/>
        <end position="20"/>
    </location>
</feature>
<feature type="compositionally biased region" description="Polar residues" evidence="1">
    <location>
        <begin position="1299"/>
        <end position="1312"/>
    </location>
</feature>
<feature type="compositionally biased region" description="Polar residues" evidence="1">
    <location>
        <begin position="1320"/>
        <end position="1329"/>
    </location>
</feature>
<feature type="compositionally biased region" description="Low complexity" evidence="1">
    <location>
        <begin position="1362"/>
        <end position="1405"/>
    </location>
</feature>
<feature type="splice variant" id="VSP_017078" description="In isoform 2." evidence="6">
    <location>
        <begin position="363"/>
        <end position="391"/>
    </location>
</feature>
<feature type="sequence conflict" description="In Ref. 1; AAV64872." evidence="7" ref="1">
    <location>
        <position position="547"/>
    </location>
</feature>
<proteinExistence type="evidence at protein level"/>
<comment type="function">
    <text>Involved in regulation of actin and microtubule organization. Part of a WAVE complex that activates the Arp2/3 complex.</text>
</comment>
<comment type="subunit">
    <text>Binds PIR.</text>
</comment>
<comment type="interaction">
    <interactant intactId="EBI-1547830">
        <id>Q5S2C4</id>
    </interactant>
    <interactant intactId="EBI-1547858">
        <id>Q5S2C3</id>
        <label>PIR</label>
    </interactant>
    <organismsDiffer>false</organismsDiffer>
    <experiments>5</experiments>
</comment>
<comment type="alternative products">
    <event type="alternative splicing"/>
    <isoform>
        <id>Q5S2C4-1</id>
        <name>1</name>
        <sequence type="displayed"/>
    </isoform>
    <isoform>
        <id>Q5S2C4-2</id>
        <name>2</name>
        <sequence type="described" ref="VSP_017078"/>
    </isoform>
</comment>
<comment type="tissue specificity">
    <text evidence="2 3 4 5">Expressed in roots, root hairs, hypocotyls, cotyledons, stems, leaves, trichomes, and flowers.</text>
</comment>
<comment type="similarity">
    <text evidence="7">Belongs to the HEM-1/HEM-2 family.</text>
</comment>
<comment type="sequence caution" evidence="7">
    <conflict type="erroneous gene model prediction">
        <sequence resource="EMBL-CDS" id="AAC61824"/>
    </conflict>
</comment>
<name>NCKP1_ARATH</name>
<protein>
    <recommendedName>
        <fullName>Protein NAP1</fullName>
    </recommendedName>
    <alternativeName>
        <fullName>ARP2/3 regulatory protein subunit NAPP</fullName>
    </alternativeName>
    <alternativeName>
        <fullName>NAP of plants</fullName>
    </alternativeName>
    <alternativeName>
        <fullName>Nck-associated protein 1</fullName>
        <shortName>AtNAP1</shortName>
        <shortName>AtNAP125</shortName>
    </alternativeName>
    <alternativeName>
        <fullName>Protein GNARLED</fullName>
    </alternativeName>
    <alternativeName>
        <fullName>p125Nap1</fullName>
    </alternativeName>
</protein>
<reference key="1">
    <citation type="journal article" date="2004" name="Plant Physiol.">
        <title>Arabidopsis NAP and PIR regulate actin-based cell morphogenesis and multiple developmental processes.</title>
        <authorList>
            <person name="Li Y."/>
            <person name="Sorefan K."/>
            <person name="Hemmann G."/>
            <person name="Bevan M.W."/>
        </authorList>
    </citation>
    <scope>NUCLEOTIDE SEQUENCE [MRNA] (ISOFORM 1)</scope>
    <scope>TISSUE SPECIFICITY</scope>
</reference>
<reference key="2">
    <citation type="journal article" date="2004" name="Plant Cell">
        <title>NAPP and PIRP encode subunits of a putative wave regulatory protein complex involved in plant cell morphogenesis.</title>
        <authorList>
            <person name="Brembu T."/>
            <person name="Winge P."/>
            <person name="Seem M."/>
            <person name="Bones A.M."/>
        </authorList>
    </citation>
    <scope>NUCLEOTIDE SEQUENCE [MRNA] (ISOFORM 2)</scope>
    <scope>IDENTIFICATION</scope>
    <scope>TISSUE SPECIFICITY</scope>
</reference>
<reference key="3">
    <citation type="journal article" date="1999" name="Nature">
        <title>Sequence and analysis of chromosome 2 of the plant Arabidopsis thaliana.</title>
        <authorList>
            <person name="Lin X."/>
            <person name="Kaul S."/>
            <person name="Rounsley S.D."/>
            <person name="Shea T.P."/>
            <person name="Benito M.-I."/>
            <person name="Town C.D."/>
            <person name="Fujii C.Y."/>
            <person name="Mason T.M."/>
            <person name="Bowman C.L."/>
            <person name="Barnstead M.E."/>
            <person name="Feldblyum T.V."/>
            <person name="Buell C.R."/>
            <person name="Ketchum K.A."/>
            <person name="Lee J.J."/>
            <person name="Ronning C.M."/>
            <person name="Koo H.L."/>
            <person name="Moffat K.S."/>
            <person name="Cronin L.A."/>
            <person name="Shen M."/>
            <person name="Pai G."/>
            <person name="Van Aken S."/>
            <person name="Umayam L."/>
            <person name="Tallon L.J."/>
            <person name="Gill J.E."/>
            <person name="Adams M.D."/>
            <person name="Carrera A.J."/>
            <person name="Creasy T.H."/>
            <person name="Goodman H.M."/>
            <person name="Somerville C.R."/>
            <person name="Copenhaver G.P."/>
            <person name="Preuss D."/>
            <person name="Nierman W.C."/>
            <person name="White O."/>
            <person name="Eisen J.A."/>
            <person name="Salzberg S.L."/>
            <person name="Fraser C.M."/>
            <person name="Venter J.C."/>
        </authorList>
    </citation>
    <scope>NUCLEOTIDE SEQUENCE [LARGE SCALE GENOMIC DNA]</scope>
    <source>
        <strain>cv. Columbia</strain>
    </source>
</reference>
<reference key="4">
    <citation type="journal article" date="2017" name="Plant J.">
        <title>Araport11: a complete reannotation of the Arabidopsis thaliana reference genome.</title>
        <authorList>
            <person name="Cheng C.Y."/>
            <person name="Krishnakumar V."/>
            <person name="Chan A.P."/>
            <person name="Thibaud-Nissen F."/>
            <person name="Schobel S."/>
            <person name="Town C.D."/>
        </authorList>
    </citation>
    <scope>GENOME REANNOTATION</scope>
    <source>
        <strain>cv. Columbia</strain>
    </source>
</reference>
<reference key="5">
    <citation type="journal article" date="2004" name="Curr. Biol.">
        <title>Arabidopsis GNARLED encodes a NAP125 homolog that positively regulates ARP2/3.</title>
        <authorList>
            <person name="El-Din El-Assal S."/>
            <person name="Le J."/>
            <person name="Basu D."/>
            <person name="Mallery E.L."/>
            <person name="Szymanski D.B."/>
        </authorList>
    </citation>
    <scope>NUCLEOTIDE SEQUENCE [MRNA] OF 1-96</scope>
    <scope>INTERACTION WITH PIR</scope>
    <scope>TISSUE SPECIFICITY</scope>
</reference>
<reference key="6">
    <citation type="journal article" date="2004" name="Development">
        <title>Interchangeable functions of Arabidopsis PIROGI and the human WAVE complex subunit SRA1 during leaf epidermal development.</title>
        <authorList>
            <person name="Basu D."/>
            <person name="El-Din El-Assal S."/>
            <person name="Le J."/>
            <person name="Mallery E.L."/>
            <person name="Szymanski D.B."/>
        </authorList>
    </citation>
    <scope>INTERACTION WITH PIR</scope>
    <scope>TISSUE SPECIFICITY</scope>
</reference>
<reference key="7">
    <citation type="journal article" date="2009" name="J. Proteomics">
        <title>Phosphoproteomic analysis of nuclei-enriched fractions from Arabidopsis thaliana.</title>
        <authorList>
            <person name="Jones A.M.E."/>
            <person name="MacLean D."/>
            <person name="Studholme D.J."/>
            <person name="Serna-Sanz A."/>
            <person name="Andreasson E."/>
            <person name="Rathjen J.P."/>
            <person name="Peck S.C."/>
        </authorList>
    </citation>
    <scope>IDENTIFICATION BY MASS SPECTROMETRY [LARGE SCALE ANALYSIS]</scope>
    <source>
        <strain>cv. Columbia</strain>
    </source>
</reference>
<organism>
    <name type="scientific">Arabidopsis thaliana</name>
    <name type="common">Mouse-ear cress</name>
    <dbReference type="NCBI Taxonomy" id="3702"/>
    <lineage>
        <taxon>Eukaryota</taxon>
        <taxon>Viridiplantae</taxon>
        <taxon>Streptophyta</taxon>
        <taxon>Embryophyta</taxon>
        <taxon>Tracheophyta</taxon>
        <taxon>Spermatophyta</taxon>
        <taxon>Magnoliopsida</taxon>
        <taxon>eudicotyledons</taxon>
        <taxon>Gunneridae</taxon>
        <taxon>Pentapetalae</taxon>
        <taxon>rosids</taxon>
        <taxon>malvids</taxon>
        <taxon>Brassicales</taxon>
        <taxon>Brassicaceae</taxon>
        <taxon>Camelineae</taxon>
        <taxon>Arabidopsis</taxon>
    </lineage>
</organism>
<evidence type="ECO:0000256" key="1">
    <source>
        <dbReference type="SAM" id="MobiDB-lite"/>
    </source>
</evidence>
<evidence type="ECO:0000269" key="2">
    <source>
    </source>
</evidence>
<evidence type="ECO:0000269" key="3">
    <source>
    </source>
</evidence>
<evidence type="ECO:0000269" key="4">
    <source>
    </source>
</evidence>
<evidence type="ECO:0000269" key="5">
    <source>
    </source>
</evidence>
<evidence type="ECO:0000303" key="6">
    <source>
    </source>
</evidence>
<evidence type="ECO:0000305" key="7"/>
<sequence>MANSRQYYPSQDESMSPTSVRSREWEGPSRWTEYLGPEMAASVSSTRSSKQIDGHVGGSTKALNIQWVVQMIEVADGLMAKMYRLNQILEYPDPVGHVFSEAFWKAGVFPNHPRICTLLSKKFPEHFSKLQLERIDKFSLDSLHDGAELHLQSLEPWIQLLLDLMAFREQALRLILDLSSTVITLLPHQNSLILHAFMDLFCAFVRVNLFAEKIPRKMLLQVYNLLHALSRNDRDCDFYHRLVQFIDSYDPPLKGLQEDLNFVSPRIGEVLEAVGPSIFLSADTRKLRNEGFLSPYHPRFPDILTNSAHPMRAQDLANVTSYREWVLLGYLVCPDELLRVTSIDIALVVLKENLVVTLFRDEVSLYQMVCEKEFGIGISFASADSINLTMQYILLHEDYQLYVLPRVLESKKMAKSGRTKQKEADLEYSVAKQVEKMISEVHEQALQLCDTIHRERRILLKQEIGRMVLFFTDQPSLLAPNIQMVFSALALAQSEVLWYFQHAGIASSRSKAARVIPVDIDPNDPTIGFLLDGMDRLCCLVRKYISAARGYALSYLSSSAGRIRYLMGTPGIVALDLDPTLKGLFQRIVQHLESIPKAQGENVSAITCDLSDFRKDWLSILMIVTSSRSSINIRHLEKATVSTGKEGLLSEGNAAYNWSRCVDELESQLSKHGSLKKLYFYHQHLTTVFRNTMFGPEGRPQHCCAWLSVASSFPECASLIIPEEVTKFGRDAVLYVESLIESIMGGLEGLINILDSEGGFGALESQLLPEQAAAYLNNASRISAPSVKSPRVVGGFTLPGHESYPENNKSIKMLEAAIQRLTNLCSILNDMEPICVINHVFVLREYMRECILGNFKRRFLTALQTDNDLQRPSVLESLIRRHMGIVHLAEQHVSMDLTQGIREILLTEAFSGPVSSLHTFEKPAEQQQTTGSAVEVVCNWYMDNIIKDVSGAGILFAPRHKYFKSTRPVGGYFAESVTDLKELQAFVRIFGGYGVDRLDRMMKVHTAALVNCIETSLRSNRELIEAAAASMHSGDRVERDASVRQIVDLDTVIGFCIEAGQALAFDDLLAEASGAVLEDNASLIHSMISGIVEHIPEEIPEKKEIRRIKGVANGVGVAGDHDSEWVRLILEEVGGANDNSWSLLPYFFASFMTSNAWNTTGFNIETGGFSNNIHCLARCISAVIAGSEYVRLQREYQQQHQSLSNGHHSSENLDSEFPPRVTAEASIKSSMLLFVKFAASIVLDSWSEANRSHLVAKLIFLDQLCEISPYLPRSSLESHVPYTILRSIYTQYYSNTPSTPLSTASPYHSPSVSLIHASPSMKNSTTPQRGSGSGSSSTAAPDSGYFKGSSSSLYGQEHYTESETGNSRNNENNNNNKQRGSSRRSGPLDYSSSHKGGSGSNSTGPSPLPRFAVSRSGPISYKQHN</sequence>
<keyword id="KW-0025">Alternative splicing</keyword>
<keyword id="KW-1185">Reference proteome</keyword>
<gene>
    <name type="primary">NAP1</name>
    <name type="synonym">GRL</name>
    <name type="synonym">NAP</name>
    <name type="synonym">NAPP</name>
    <name type="ordered locus">At2g35110</name>
    <name type="ORF">T4C15.22</name>
</gene>
<dbReference type="EMBL" id="AY787211">
    <property type="protein sequence ID" value="AAV64872.1"/>
    <property type="molecule type" value="mRNA"/>
</dbReference>
<dbReference type="EMBL" id="AY496700">
    <property type="protein sequence ID" value="AAS78643.1"/>
    <property type="molecule type" value="mRNA"/>
</dbReference>
<dbReference type="EMBL" id="AC004667">
    <property type="protein sequence ID" value="AAC61824.1"/>
    <property type="status" value="ALT_SEQ"/>
    <property type="molecule type" value="Genomic_DNA"/>
</dbReference>
<dbReference type="EMBL" id="CP002685">
    <property type="protein sequence ID" value="AEC09065.1"/>
    <property type="molecule type" value="Genomic_DNA"/>
</dbReference>
<dbReference type="EMBL" id="CP002685">
    <property type="protein sequence ID" value="AEC09066.1"/>
    <property type="molecule type" value="Genomic_DNA"/>
</dbReference>
<dbReference type="EMBL" id="AY662956">
    <property type="protein sequence ID" value="AAT76307.1"/>
    <property type="molecule type" value="mRNA"/>
</dbReference>
<dbReference type="EMBL" id="BK004072">
    <property type="protein sequence ID" value="DAA04563.1"/>
    <property type="molecule type" value="Genomic_DNA"/>
</dbReference>
<dbReference type="PIR" id="G84764">
    <property type="entry name" value="G84764"/>
</dbReference>
<dbReference type="RefSeq" id="NP_001031485.1">
    <molecule id="Q5S2C4-2"/>
    <property type="nucleotide sequence ID" value="NM_001036408.3"/>
</dbReference>
<dbReference type="RefSeq" id="NP_181056.2">
    <molecule id="Q5S2C4-1"/>
    <property type="nucleotide sequence ID" value="NM_129064.3"/>
</dbReference>
<dbReference type="SMR" id="Q5S2C4"/>
<dbReference type="BioGRID" id="3423">
    <property type="interactions" value="12"/>
</dbReference>
<dbReference type="DIP" id="DIP-29825N"/>
<dbReference type="FunCoup" id="Q5S2C4">
    <property type="interactions" value="3766"/>
</dbReference>
<dbReference type="IntAct" id="Q5S2C4">
    <property type="interactions" value="6"/>
</dbReference>
<dbReference type="STRING" id="3702.Q5S2C4"/>
<dbReference type="iPTMnet" id="Q5S2C4"/>
<dbReference type="PaxDb" id="3702-AT2G35110.1"/>
<dbReference type="ProteomicsDB" id="251124">
    <molecule id="Q5S2C4-1"/>
</dbReference>
<dbReference type="EnsemblPlants" id="AT2G35110.1">
    <molecule id="Q5S2C4-1"/>
    <property type="protein sequence ID" value="AT2G35110.1"/>
    <property type="gene ID" value="AT2G35110"/>
</dbReference>
<dbReference type="EnsemblPlants" id="AT2G35110.2">
    <molecule id="Q5S2C4-2"/>
    <property type="protein sequence ID" value="AT2G35110.2"/>
    <property type="gene ID" value="AT2G35110"/>
</dbReference>
<dbReference type="GeneID" id="818077"/>
<dbReference type="Gramene" id="AT2G35110.1">
    <molecule id="Q5S2C4-1"/>
    <property type="protein sequence ID" value="AT2G35110.1"/>
    <property type="gene ID" value="AT2G35110"/>
</dbReference>
<dbReference type="Gramene" id="AT2G35110.2">
    <molecule id="Q5S2C4-2"/>
    <property type="protein sequence ID" value="AT2G35110.2"/>
    <property type="gene ID" value="AT2G35110"/>
</dbReference>
<dbReference type="KEGG" id="ath:AT2G35110"/>
<dbReference type="Araport" id="AT2G35110"/>
<dbReference type="TAIR" id="AT2G35110">
    <property type="gene designation" value="GRL"/>
</dbReference>
<dbReference type="eggNOG" id="KOG1917">
    <property type="taxonomic scope" value="Eukaryota"/>
</dbReference>
<dbReference type="InParanoid" id="Q5S2C4"/>
<dbReference type="OMA" id="INVWEYT"/>
<dbReference type="PhylomeDB" id="Q5S2C4"/>
<dbReference type="PRO" id="PR:Q5S2C4"/>
<dbReference type="Proteomes" id="UP000006548">
    <property type="component" value="Chromosome 2"/>
</dbReference>
<dbReference type="ExpressionAtlas" id="Q5S2C4">
    <property type="expression patterns" value="baseline and differential"/>
</dbReference>
<dbReference type="GO" id="GO:0005789">
    <property type="term" value="C:endoplasmic reticulum membrane"/>
    <property type="evidence" value="ECO:0000314"/>
    <property type="project" value="TAIR"/>
</dbReference>
<dbReference type="GO" id="GO:0005634">
    <property type="term" value="C:nucleus"/>
    <property type="evidence" value="ECO:0000314"/>
    <property type="project" value="TAIR"/>
</dbReference>
<dbReference type="GO" id="GO:0031209">
    <property type="term" value="C:SCAR complex"/>
    <property type="evidence" value="ECO:0000304"/>
    <property type="project" value="TAIR"/>
</dbReference>
<dbReference type="GO" id="GO:0007015">
    <property type="term" value="P:actin filament organization"/>
    <property type="evidence" value="ECO:0000315"/>
    <property type="project" value="TAIR"/>
</dbReference>
<dbReference type="GO" id="GO:0045010">
    <property type="term" value="P:actin nucleation"/>
    <property type="evidence" value="ECO:0000304"/>
    <property type="project" value="TAIR"/>
</dbReference>
<dbReference type="GO" id="GO:0009825">
    <property type="term" value="P:multidimensional cell growth"/>
    <property type="evidence" value="ECO:0000315"/>
    <property type="project" value="TAIR"/>
</dbReference>
<dbReference type="GO" id="GO:0045893">
    <property type="term" value="P:positive regulation of DNA-templated transcription"/>
    <property type="evidence" value="ECO:0000314"/>
    <property type="project" value="TAIR"/>
</dbReference>
<dbReference type="GO" id="GO:0010090">
    <property type="term" value="P:trichome morphogenesis"/>
    <property type="evidence" value="ECO:0000315"/>
    <property type="project" value="TAIR"/>
</dbReference>
<dbReference type="InterPro" id="IPR019137">
    <property type="entry name" value="Nck-associated_protein-1"/>
</dbReference>
<dbReference type="PANTHER" id="PTHR12093:SF10">
    <property type="entry name" value="MEMBRANE-ASSOCIATED PROTEIN HEM"/>
    <property type="match status" value="1"/>
</dbReference>
<dbReference type="PANTHER" id="PTHR12093">
    <property type="entry name" value="NCK-ASSOCIATED PROTEIN 1"/>
    <property type="match status" value="1"/>
</dbReference>
<dbReference type="Pfam" id="PF09735">
    <property type="entry name" value="Nckap1"/>
    <property type="match status" value="1"/>
</dbReference>
<accession>Q5S2C4</accession>
<accession>O82180</accession>
<accession>Q66GU3</accession>
<accession>Q6BDH4</accession>